<name>PNSB3_ARATH</name>
<feature type="transit peptide" description="Chloroplast" evidence="1">
    <location>
        <begin position="1"/>
        <end position="48"/>
    </location>
</feature>
<feature type="chain" id="PRO_0000431821" description="Photosynthetic NDH subunit of subcomplex B 3, chloroplastic">
    <location>
        <begin position="49"/>
        <end position="204"/>
    </location>
</feature>
<feature type="domain" description="2Fe-2S ferredoxin-type" evidence="2">
    <location>
        <begin position="76"/>
        <end position="180"/>
    </location>
</feature>
<feature type="region of interest" description="Disordered" evidence="3">
    <location>
        <begin position="1"/>
        <end position="24"/>
    </location>
</feature>
<feature type="region of interest" description="Disordered" evidence="3">
    <location>
        <begin position="45"/>
        <end position="68"/>
    </location>
</feature>
<feature type="binding site" evidence="2">
    <location>
        <position position="120"/>
    </location>
    <ligand>
        <name>[2Fe-2S] cluster</name>
        <dbReference type="ChEBI" id="CHEBI:190135"/>
    </ligand>
</feature>
<feature type="binding site" evidence="2">
    <location>
        <position position="126"/>
    </location>
    <ligand>
        <name>[2Fe-2S] cluster</name>
        <dbReference type="ChEBI" id="CHEBI:190135"/>
    </ligand>
</feature>
<feature type="binding site" evidence="2">
    <location>
        <position position="129"/>
    </location>
    <ligand>
        <name>[2Fe-2S] cluster</name>
        <dbReference type="ChEBI" id="CHEBI:190135"/>
    </ligand>
</feature>
<feature type="binding site" evidence="2">
    <location>
        <position position="162"/>
    </location>
    <ligand>
        <name>[2Fe-2S] cluster</name>
        <dbReference type="ChEBI" id="CHEBI:190135"/>
    </ligand>
</feature>
<accession>Q9LU21</accession>
<organism>
    <name type="scientific">Arabidopsis thaliana</name>
    <name type="common">Mouse-ear cress</name>
    <dbReference type="NCBI Taxonomy" id="3702"/>
    <lineage>
        <taxon>Eukaryota</taxon>
        <taxon>Viridiplantae</taxon>
        <taxon>Streptophyta</taxon>
        <taxon>Embryophyta</taxon>
        <taxon>Tracheophyta</taxon>
        <taxon>Spermatophyta</taxon>
        <taxon>Magnoliopsida</taxon>
        <taxon>eudicotyledons</taxon>
        <taxon>Gunneridae</taxon>
        <taxon>Pentapetalae</taxon>
        <taxon>rosids</taxon>
        <taxon>malvids</taxon>
        <taxon>Brassicales</taxon>
        <taxon>Brassicaceae</taxon>
        <taxon>Camelineae</taxon>
        <taxon>Arabidopsis</taxon>
    </lineage>
</organism>
<dbReference type="EMBL" id="AB023046">
    <property type="protein sequence ID" value="BAB01265.1"/>
    <property type="molecule type" value="Genomic_DNA"/>
</dbReference>
<dbReference type="EMBL" id="CP002686">
    <property type="protein sequence ID" value="AEE75790.1"/>
    <property type="molecule type" value="Genomic_DNA"/>
</dbReference>
<dbReference type="EMBL" id="AY042867">
    <property type="protein sequence ID" value="AAK68807.1"/>
    <property type="molecule type" value="mRNA"/>
</dbReference>
<dbReference type="EMBL" id="BT006260">
    <property type="protein sequence ID" value="AAP13368.1"/>
    <property type="molecule type" value="mRNA"/>
</dbReference>
<dbReference type="RefSeq" id="NP_188246.1">
    <property type="nucleotide sequence ID" value="NM_112496.3"/>
</dbReference>
<dbReference type="PDB" id="7WFF">
    <property type="method" value="EM"/>
    <property type="resolution" value="3.59 A"/>
    <property type="chains" value="c=1-204"/>
</dbReference>
<dbReference type="PDB" id="7WG5">
    <property type="method" value="EM"/>
    <property type="resolution" value="3.89 A"/>
    <property type="chains" value="c=1-204"/>
</dbReference>
<dbReference type="PDBsum" id="7WFF"/>
<dbReference type="PDBsum" id="7WG5"/>
<dbReference type="EMDB" id="EMD-32464"/>
<dbReference type="EMDB" id="EMD-32477"/>
<dbReference type="SMR" id="Q9LU21"/>
<dbReference type="FunCoup" id="Q9LU21">
    <property type="interactions" value="1002"/>
</dbReference>
<dbReference type="IntAct" id="Q9LU21">
    <property type="interactions" value="9"/>
</dbReference>
<dbReference type="STRING" id="3702.Q9LU21"/>
<dbReference type="TCDB" id="3.D.1.8.1">
    <property type="family name" value="the h+ or na+-translocating nadh dehydrogenase (ndh) family"/>
</dbReference>
<dbReference type="PaxDb" id="3702-AT3G16250.1"/>
<dbReference type="ProteomicsDB" id="226195"/>
<dbReference type="EnsemblPlants" id="AT3G16250.1">
    <property type="protein sequence ID" value="AT3G16250.1"/>
    <property type="gene ID" value="AT3G16250"/>
</dbReference>
<dbReference type="GeneID" id="820871"/>
<dbReference type="Gramene" id="AT3G16250.1">
    <property type="protein sequence ID" value="AT3G16250.1"/>
    <property type="gene ID" value="AT3G16250"/>
</dbReference>
<dbReference type="KEGG" id="ath:AT3G16250"/>
<dbReference type="Araport" id="AT3G16250"/>
<dbReference type="TAIR" id="AT3G16250">
    <property type="gene designation" value="PNSB3"/>
</dbReference>
<dbReference type="eggNOG" id="ENOG502S4WU">
    <property type="taxonomic scope" value="Eukaryota"/>
</dbReference>
<dbReference type="HOGENOM" id="CLU_082632_10_0_1"/>
<dbReference type="InParanoid" id="Q9LU21"/>
<dbReference type="OMA" id="EWNIPKN"/>
<dbReference type="OrthoDB" id="5987010at2759"/>
<dbReference type="PhylomeDB" id="Q9LU21"/>
<dbReference type="PRO" id="PR:Q9LU21"/>
<dbReference type="Proteomes" id="UP000006548">
    <property type="component" value="Chromosome 3"/>
</dbReference>
<dbReference type="ExpressionAtlas" id="Q9LU21">
    <property type="expression patterns" value="baseline and differential"/>
</dbReference>
<dbReference type="GO" id="GO:0009535">
    <property type="term" value="C:chloroplast thylakoid membrane"/>
    <property type="evidence" value="ECO:0000314"/>
    <property type="project" value="TAIR"/>
</dbReference>
<dbReference type="GO" id="GO:0005829">
    <property type="term" value="C:cytosol"/>
    <property type="evidence" value="ECO:0007005"/>
    <property type="project" value="TAIR"/>
</dbReference>
<dbReference type="GO" id="GO:0010598">
    <property type="term" value="C:NAD(P)H dehydrogenase complex (plastoquinone)"/>
    <property type="evidence" value="ECO:0000314"/>
    <property type="project" value="TAIR"/>
</dbReference>
<dbReference type="GO" id="GO:0051537">
    <property type="term" value="F:2 iron, 2 sulfur cluster binding"/>
    <property type="evidence" value="ECO:0007669"/>
    <property type="project" value="UniProtKB-KW"/>
</dbReference>
<dbReference type="GO" id="GO:0046872">
    <property type="term" value="F:metal ion binding"/>
    <property type="evidence" value="ECO:0007669"/>
    <property type="project" value="UniProtKB-KW"/>
</dbReference>
<dbReference type="GO" id="GO:0140647">
    <property type="term" value="P:P450-containing electron transport chain"/>
    <property type="evidence" value="ECO:0007669"/>
    <property type="project" value="InterPro"/>
</dbReference>
<dbReference type="GO" id="GO:0009773">
    <property type="term" value="P:photosynthetic electron transport in photosystem I"/>
    <property type="evidence" value="ECO:0000315"/>
    <property type="project" value="TAIR"/>
</dbReference>
<dbReference type="CDD" id="cd00207">
    <property type="entry name" value="fer2"/>
    <property type="match status" value="1"/>
</dbReference>
<dbReference type="FunFam" id="3.10.20.30:FF:000048">
    <property type="entry name" value="BnaA01g28110D protein"/>
    <property type="match status" value="1"/>
</dbReference>
<dbReference type="Gene3D" id="3.10.20.30">
    <property type="match status" value="1"/>
</dbReference>
<dbReference type="InterPro" id="IPR036010">
    <property type="entry name" value="2Fe-2S_ferredoxin-like_sf"/>
</dbReference>
<dbReference type="InterPro" id="IPR001041">
    <property type="entry name" value="2Fe-2S_ferredoxin-type"/>
</dbReference>
<dbReference type="InterPro" id="IPR001055">
    <property type="entry name" value="Adrenodoxin-like"/>
</dbReference>
<dbReference type="InterPro" id="IPR012675">
    <property type="entry name" value="Beta-grasp_dom_sf"/>
</dbReference>
<dbReference type="PANTHER" id="PTHR23426">
    <property type="entry name" value="FERREDOXIN/ADRENODOXIN"/>
    <property type="match status" value="1"/>
</dbReference>
<dbReference type="PANTHER" id="PTHR23426:SF27">
    <property type="entry name" value="PHOTOSYNTHETIC NDH SUBUNIT OF SUBCOMPLEX B 3, CHLOROPLASTIC"/>
    <property type="match status" value="1"/>
</dbReference>
<dbReference type="Pfam" id="PF00111">
    <property type="entry name" value="Fer2"/>
    <property type="match status" value="1"/>
</dbReference>
<dbReference type="SUPFAM" id="SSF54292">
    <property type="entry name" value="2Fe-2S ferredoxin-like"/>
    <property type="match status" value="1"/>
</dbReference>
<sequence>MGSVQLSGSGLVASLPPNHSFSHKTKLNKPNSYFFRSKHNAARTKTVRAISTAPASQPPAADEPDEPPAVDFAFVHSVLLPDGTPDVHWRRANGGQKLRDIMLDSNIELYGPYSKPLSNCAGVGTCATCMVEIVNGKELLNPRTDIEKEKLKRKPKNWRLACQTNVGNPDSTGLVVIQQLPEWKAHEWNIPKNIPNDDDLETST</sequence>
<comment type="function">
    <text evidence="8">NDH shuttles electrons from NAD(P)H:plastoquinone, via FMN and iron-sulfur (Fe-S) centers, to quinones in the photosynthetic chain and possibly in a chloroplast respiratory chain. The immediate electron acceptor for the enzyme in this species is believed to be plastoquinone. Couples the redox reaction to proton translocation, and thus conserves the redox energy in a proton gradient.</text>
</comment>
<comment type="subunit">
    <text evidence="4 5">Part of the chloroplast NDH complex, composed of a mixture of chloroplast and nucleus encoded subunits. Component of the NDH subcomplex B, at least composed of PnsB1, PnsB2, PnsB3, PnsB4 and PnsB5.</text>
</comment>
<comment type="subcellular location">
    <subcellularLocation>
        <location evidence="4">Plastid</location>
        <location evidence="4">Chloroplast thylakoid membrane</location>
    </subcellularLocation>
</comment>
<comment type="disruption phenotype">
    <text evidence="4">Malfunction of the NDH complex.</text>
</comment>
<evidence type="ECO:0000255" key="1"/>
<evidence type="ECO:0000255" key="2">
    <source>
        <dbReference type="PROSITE-ProRule" id="PRU00465"/>
    </source>
</evidence>
<evidence type="ECO:0000256" key="3">
    <source>
        <dbReference type="SAM" id="MobiDB-lite"/>
    </source>
</evidence>
<evidence type="ECO:0000269" key="4">
    <source>
    </source>
</evidence>
<evidence type="ECO:0000269" key="5">
    <source>
    </source>
</evidence>
<evidence type="ECO:0000303" key="6">
    <source>
    </source>
</evidence>
<evidence type="ECO:0000303" key="7">
    <source>
    </source>
</evidence>
<evidence type="ECO:0000305" key="8"/>
<evidence type="ECO:0000312" key="9">
    <source>
        <dbReference type="Araport" id="AT3G16250"/>
    </source>
</evidence>
<evidence type="ECO:0000312" key="10">
    <source>
        <dbReference type="EMBL" id="BAB01265.1"/>
    </source>
</evidence>
<gene>
    <name evidence="7" type="primary">PNSB3</name>
    <name evidence="6" type="synonym">NDF4</name>
    <name evidence="9" type="ordered locus">At3g16250</name>
    <name evidence="10" type="ORF">MYA6.6</name>
</gene>
<reference key="1">
    <citation type="journal article" date="2000" name="DNA Res.">
        <title>Structural analysis of Arabidopsis thaliana chromosome 3. I. Sequence features of the regions of 4,504,864 bp covered by sixty P1 and TAC clones.</title>
        <authorList>
            <person name="Sato S."/>
            <person name="Nakamura Y."/>
            <person name="Kaneko T."/>
            <person name="Katoh T."/>
            <person name="Asamizu E."/>
            <person name="Tabata S."/>
        </authorList>
    </citation>
    <scope>NUCLEOTIDE SEQUENCE [LARGE SCALE GENOMIC DNA]</scope>
    <source>
        <strain>cv. Columbia</strain>
    </source>
</reference>
<reference key="2">
    <citation type="journal article" date="2017" name="Plant J.">
        <title>Araport11: a complete reannotation of the Arabidopsis thaliana reference genome.</title>
        <authorList>
            <person name="Cheng C.Y."/>
            <person name="Krishnakumar V."/>
            <person name="Chan A.P."/>
            <person name="Thibaud-Nissen F."/>
            <person name="Schobel S."/>
            <person name="Town C.D."/>
        </authorList>
    </citation>
    <scope>GENOME REANNOTATION</scope>
    <source>
        <strain>cv. Columbia</strain>
    </source>
</reference>
<reference key="3">
    <citation type="journal article" date="2003" name="Science">
        <title>Empirical analysis of transcriptional activity in the Arabidopsis genome.</title>
        <authorList>
            <person name="Yamada K."/>
            <person name="Lim J."/>
            <person name="Dale J.M."/>
            <person name="Chen H."/>
            <person name="Shinn P."/>
            <person name="Palm C.J."/>
            <person name="Southwick A.M."/>
            <person name="Wu H.C."/>
            <person name="Kim C.J."/>
            <person name="Nguyen M."/>
            <person name="Pham P.K."/>
            <person name="Cheuk R.F."/>
            <person name="Karlin-Newmann G."/>
            <person name="Liu S.X."/>
            <person name="Lam B."/>
            <person name="Sakano H."/>
            <person name="Wu T."/>
            <person name="Yu G."/>
            <person name="Miranda M."/>
            <person name="Quach H.L."/>
            <person name="Tripp M."/>
            <person name="Chang C.H."/>
            <person name="Lee J.M."/>
            <person name="Toriumi M.J."/>
            <person name="Chan M.M."/>
            <person name="Tang C.C."/>
            <person name="Onodera C.S."/>
            <person name="Deng J.M."/>
            <person name="Akiyama K."/>
            <person name="Ansari Y."/>
            <person name="Arakawa T."/>
            <person name="Banh J."/>
            <person name="Banno F."/>
            <person name="Bowser L."/>
            <person name="Brooks S.Y."/>
            <person name="Carninci P."/>
            <person name="Chao Q."/>
            <person name="Choy N."/>
            <person name="Enju A."/>
            <person name="Goldsmith A.D."/>
            <person name="Gurjal M."/>
            <person name="Hansen N.F."/>
            <person name="Hayashizaki Y."/>
            <person name="Johnson-Hopson C."/>
            <person name="Hsuan V.W."/>
            <person name="Iida K."/>
            <person name="Karnes M."/>
            <person name="Khan S."/>
            <person name="Koesema E."/>
            <person name="Ishida J."/>
            <person name="Jiang P.X."/>
            <person name="Jones T."/>
            <person name="Kawai J."/>
            <person name="Kamiya A."/>
            <person name="Meyers C."/>
            <person name="Nakajima M."/>
            <person name="Narusaka M."/>
            <person name="Seki M."/>
            <person name="Sakurai T."/>
            <person name="Satou M."/>
            <person name="Tamse R."/>
            <person name="Vaysberg M."/>
            <person name="Wallender E.K."/>
            <person name="Wong C."/>
            <person name="Yamamura Y."/>
            <person name="Yuan S."/>
            <person name="Shinozaki K."/>
            <person name="Davis R.W."/>
            <person name="Theologis A."/>
            <person name="Ecker J.R."/>
        </authorList>
    </citation>
    <scope>NUCLEOTIDE SEQUENCE [LARGE SCALE MRNA]</scope>
    <source>
        <strain>cv. Columbia</strain>
    </source>
</reference>
<reference key="4">
    <citation type="journal article" date="2009" name="Mol. Plant">
        <title>Towards characterization of the chloroplast NAD(P)H dehydrogenase complex.</title>
        <authorList>
            <person name="Suorsa M."/>
            <person name="Sirpioe S."/>
            <person name="Aro E.M."/>
        </authorList>
    </citation>
    <scope>REVIEW</scope>
</reference>
<reference key="5">
    <citation type="journal article" date="2009" name="Plant J.">
        <title>Three novel subunits of Arabidopsis chloroplastic NAD(P)H dehydrogenase identified by bioinformatic and reverse genetic approaches.</title>
        <authorList>
            <person name="Takabayashi A."/>
            <person name="Ishikawa N."/>
            <person name="Obayashi T."/>
            <person name="Ishida S."/>
            <person name="Obokata J."/>
            <person name="Endo T."/>
            <person name="Sato F."/>
        </authorList>
    </citation>
    <scope>COMPONENT OF THE NDH COMPLEX</scope>
    <scope>SUBCELLULAR LOCATION</scope>
    <scope>DISRUPTION PHENOTYPE</scope>
</reference>
<reference key="6">
    <citation type="journal article" date="2011" name="Biochim. Biophys. Acta">
        <title>Structure and biogenesis of the chloroplast NAD(P)H dehydrogenase complex.</title>
        <authorList>
            <person name="Peng L."/>
            <person name="Yamamoto H."/>
            <person name="Shikanai T."/>
        </authorList>
    </citation>
    <scope>REVIEW</scope>
</reference>
<reference key="7">
    <citation type="journal article" date="2011" name="Plant Cell Physiol.">
        <title>Structure of the chloroplast NADH dehydrogenase-like complex: nomenclature for nuclear-encoded subunits.</title>
        <authorList>
            <person name="Ifuku K."/>
            <person name="Endo T."/>
            <person name="Shikanai T."/>
            <person name="Aro E.M."/>
        </authorList>
    </citation>
    <scope>NOMENCLATURE</scope>
    <scope>COMPONENT OF THE NDH COMPLEX</scope>
</reference>
<proteinExistence type="evidence at protein level"/>
<keyword id="KW-0001">2Fe-2S</keyword>
<keyword id="KW-0002">3D-structure</keyword>
<keyword id="KW-0150">Chloroplast</keyword>
<keyword id="KW-0408">Iron</keyword>
<keyword id="KW-0411">Iron-sulfur</keyword>
<keyword id="KW-0472">Membrane</keyword>
<keyword id="KW-0479">Metal-binding</keyword>
<keyword id="KW-0934">Plastid</keyword>
<keyword id="KW-1185">Reference proteome</keyword>
<keyword id="KW-0793">Thylakoid</keyword>
<keyword id="KW-0809">Transit peptide</keyword>
<keyword id="KW-0813">Transport</keyword>
<protein>
    <recommendedName>
        <fullName evidence="7">Photosynthetic NDH subunit of subcomplex B 3, chloroplastic</fullName>
        <shortName evidence="7">Protein PnsB3</shortName>
    </recommendedName>
    <alternativeName>
        <fullName evidence="6">NDH-DEPENDENT CYCLIC ELECTRON FLOW 4</fullName>
    </alternativeName>
</protein>